<keyword id="KW-0028">Amino-acid biosynthesis</keyword>
<keyword id="KW-0368">Histidine biosynthesis</keyword>
<keyword id="KW-0378">Hydrolase</keyword>
<keyword id="KW-0486">Methionine biosynthesis</keyword>
<keyword id="KW-0511">Multifunctional enzyme</keyword>
<keyword id="KW-0521">NADP</keyword>
<keyword id="KW-0554">One-carbon metabolism</keyword>
<keyword id="KW-0560">Oxidoreductase</keyword>
<keyword id="KW-0658">Purine biosynthesis</keyword>
<keyword id="KW-1185">Reference proteome</keyword>
<accession>B3PHG5</accession>
<evidence type="ECO:0000255" key="1">
    <source>
        <dbReference type="HAMAP-Rule" id="MF_01576"/>
    </source>
</evidence>
<proteinExistence type="inferred from homology"/>
<name>FOLD_CELJU</name>
<reference key="1">
    <citation type="journal article" date="2008" name="J. Bacteriol.">
        <title>Insights into plant cell wall degradation from the genome sequence of the soil bacterium Cellvibrio japonicus.</title>
        <authorList>
            <person name="DeBoy R.T."/>
            <person name="Mongodin E.F."/>
            <person name="Fouts D.E."/>
            <person name="Tailford L.E."/>
            <person name="Khouri H."/>
            <person name="Emerson J.B."/>
            <person name="Mohamoud Y."/>
            <person name="Watkins K."/>
            <person name="Henrissat B."/>
            <person name="Gilbert H.J."/>
            <person name="Nelson K.E."/>
        </authorList>
    </citation>
    <scope>NUCLEOTIDE SEQUENCE [LARGE SCALE GENOMIC DNA]</scope>
    <source>
        <strain>Ueda107</strain>
    </source>
</reference>
<protein>
    <recommendedName>
        <fullName evidence="1">Bifunctional protein FolD</fullName>
    </recommendedName>
    <domain>
        <recommendedName>
            <fullName evidence="1">Methylenetetrahydrofolate dehydrogenase</fullName>
            <ecNumber evidence="1">1.5.1.5</ecNumber>
        </recommendedName>
    </domain>
    <domain>
        <recommendedName>
            <fullName evidence="1">Methenyltetrahydrofolate cyclohydrolase</fullName>
            <ecNumber evidence="1">3.5.4.9</ecNumber>
        </recommendedName>
    </domain>
</protein>
<dbReference type="EC" id="1.5.1.5" evidence="1"/>
<dbReference type="EC" id="3.5.4.9" evidence="1"/>
<dbReference type="EMBL" id="CP000934">
    <property type="protein sequence ID" value="ACE82787.1"/>
    <property type="molecule type" value="Genomic_DNA"/>
</dbReference>
<dbReference type="RefSeq" id="WP_012487574.1">
    <property type="nucleotide sequence ID" value="NC_010995.1"/>
</dbReference>
<dbReference type="SMR" id="B3PHG5"/>
<dbReference type="STRING" id="498211.CJA_1964"/>
<dbReference type="KEGG" id="cja:CJA_1964"/>
<dbReference type="eggNOG" id="COG0190">
    <property type="taxonomic scope" value="Bacteria"/>
</dbReference>
<dbReference type="HOGENOM" id="CLU_034045_2_1_6"/>
<dbReference type="OrthoDB" id="9803580at2"/>
<dbReference type="UniPathway" id="UPA00193"/>
<dbReference type="Proteomes" id="UP000001036">
    <property type="component" value="Chromosome"/>
</dbReference>
<dbReference type="GO" id="GO:0005829">
    <property type="term" value="C:cytosol"/>
    <property type="evidence" value="ECO:0007669"/>
    <property type="project" value="TreeGrafter"/>
</dbReference>
<dbReference type="GO" id="GO:0004477">
    <property type="term" value="F:methenyltetrahydrofolate cyclohydrolase activity"/>
    <property type="evidence" value="ECO:0007669"/>
    <property type="project" value="UniProtKB-UniRule"/>
</dbReference>
<dbReference type="GO" id="GO:0004488">
    <property type="term" value="F:methylenetetrahydrofolate dehydrogenase (NADP+) activity"/>
    <property type="evidence" value="ECO:0007669"/>
    <property type="project" value="UniProtKB-UniRule"/>
</dbReference>
<dbReference type="GO" id="GO:0000105">
    <property type="term" value="P:L-histidine biosynthetic process"/>
    <property type="evidence" value="ECO:0007669"/>
    <property type="project" value="UniProtKB-KW"/>
</dbReference>
<dbReference type="GO" id="GO:0009086">
    <property type="term" value="P:methionine biosynthetic process"/>
    <property type="evidence" value="ECO:0007669"/>
    <property type="project" value="UniProtKB-KW"/>
</dbReference>
<dbReference type="GO" id="GO:0006164">
    <property type="term" value="P:purine nucleotide biosynthetic process"/>
    <property type="evidence" value="ECO:0007669"/>
    <property type="project" value="UniProtKB-KW"/>
</dbReference>
<dbReference type="GO" id="GO:0035999">
    <property type="term" value="P:tetrahydrofolate interconversion"/>
    <property type="evidence" value="ECO:0007669"/>
    <property type="project" value="UniProtKB-UniRule"/>
</dbReference>
<dbReference type="CDD" id="cd01080">
    <property type="entry name" value="NAD_bind_m-THF_DH_Cyclohyd"/>
    <property type="match status" value="1"/>
</dbReference>
<dbReference type="FunFam" id="3.40.50.720:FF:000094">
    <property type="entry name" value="Bifunctional protein FolD"/>
    <property type="match status" value="1"/>
</dbReference>
<dbReference type="FunFam" id="3.40.50.10860:FF:000005">
    <property type="entry name" value="C-1-tetrahydrofolate synthase, cytoplasmic, putative"/>
    <property type="match status" value="1"/>
</dbReference>
<dbReference type="Gene3D" id="3.40.50.10860">
    <property type="entry name" value="Leucine Dehydrogenase, chain A, domain 1"/>
    <property type="match status" value="1"/>
</dbReference>
<dbReference type="Gene3D" id="3.40.50.720">
    <property type="entry name" value="NAD(P)-binding Rossmann-like Domain"/>
    <property type="match status" value="1"/>
</dbReference>
<dbReference type="HAMAP" id="MF_01576">
    <property type="entry name" value="THF_DHG_CYH"/>
    <property type="match status" value="1"/>
</dbReference>
<dbReference type="InterPro" id="IPR046346">
    <property type="entry name" value="Aminoacid_DH-like_N_sf"/>
</dbReference>
<dbReference type="InterPro" id="IPR036291">
    <property type="entry name" value="NAD(P)-bd_dom_sf"/>
</dbReference>
<dbReference type="InterPro" id="IPR000672">
    <property type="entry name" value="THF_DH/CycHdrlase"/>
</dbReference>
<dbReference type="InterPro" id="IPR020630">
    <property type="entry name" value="THF_DH/CycHdrlase_cat_dom"/>
</dbReference>
<dbReference type="InterPro" id="IPR020867">
    <property type="entry name" value="THF_DH/CycHdrlase_CS"/>
</dbReference>
<dbReference type="InterPro" id="IPR020631">
    <property type="entry name" value="THF_DH/CycHdrlase_NAD-bd_dom"/>
</dbReference>
<dbReference type="NCBIfam" id="NF010788">
    <property type="entry name" value="PRK14192.1"/>
    <property type="match status" value="1"/>
</dbReference>
<dbReference type="PANTHER" id="PTHR48099:SF5">
    <property type="entry name" value="C-1-TETRAHYDROFOLATE SYNTHASE, CYTOPLASMIC"/>
    <property type="match status" value="1"/>
</dbReference>
<dbReference type="PANTHER" id="PTHR48099">
    <property type="entry name" value="C-1-TETRAHYDROFOLATE SYNTHASE, CYTOPLASMIC-RELATED"/>
    <property type="match status" value="1"/>
</dbReference>
<dbReference type="Pfam" id="PF00763">
    <property type="entry name" value="THF_DHG_CYH"/>
    <property type="match status" value="1"/>
</dbReference>
<dbReference type="Pfam" id="PF02882">
    <property type="entry name" value="THF_DHG_CYH_C"/>
    <property type="match status" value="1"/>
</dbReference>
<dbReference type="PRINTS" id="PR00085">
    <property type="entry name" value="THFDHDRGNASE"/>
</dbReference>
<dbReference type="SUPFAM" id="SSF53223">
    <property type="entry name" value="Aminoacid dehydrogenase-like, N-terminal domain"/>
    <property type="match status" value="1"/>
</dbReference>
<dbReference type="SUPFAM" id="SSF51735">
    <property type="entry name" value="NAD(P)-binding Rossmann-fold domains"/>
    <property type="match status" value="1"/>
</dbReference>
<dbReference type="PROSITE" id="PS00767">
    <property type="entry name" value="THF_DHG_CYH_2"/>
    <property type="match status" value="1"/>
</dbReference>
<comment type="function">
    <text evidence="1">Catalyzes the oxidation of 5,10-methylenetetrahydrofolate to 5,10-methenyltetrahydrofolate and then the hydrolysis of 5,10-methenyltetrahydrofolate to 10-formyltetrahydrofolate.</text>
</comment>
<comment type="catalytic activity">
    <reaction evidence="1">
        <text>(6R)-5,10-methylene-5,6,7,8-tetrahydrofolate + NADP(+) = (6R)-5,10-methenyltetrahydrofolate + NADPH</text>
        <dbReference type="Rhea" id="RHEA:22812"/>
        <dbReference type="ChEBI" id="CHEBI:15636"/>
        <dbReference type="ChEBI" id="CHEBI:57455"/>
        <dbReference type="ChEBI" id="CHEBI:57783"/>
        <dbReference type="ChEBI" id="CHEBI:58349"/>
        <dbReference type="EC" id="1.5.1.5"/>
    </reaction>
</comment>
<comment type="catalytic activity">
    <reaction evidence="1">
        <text>(6R)-5,10-methenyltetrahydrofolate + H2O = (6R)-10-formyltetrahydrofolate + H(+)</text>
        <dbReference type="Rhea" id="RHEA:23700"/>
        <dbReference type="ChEBI" id="CHEBI:15377"/>
        <dbReference type="ChEBI" id="CHEBI:15378"/>
        <dbReference type="ChEBI" id="CHEBI:57455"/>
        <dbReference type="ChEBI" id="CHEBI:195366"/>
        <dbReference type="EC" id="3.5.4.9"/>
    </reaction>
</comment>
<comment type="pathway">
    <text evidence="1">One-carbon metabolism; tetrahydrofolate interconversion.</text>
</comment>
<comment type="subunit">
    <text evidence="1">Homodimer.</text>
</comment>
<comment type="similarity">
    <text evidence="1">Belongs to the tetrahydrofolate dehydrogenase/cyclohydrolase family.</text>
</comment>
<sequence length="280" mass="29786">MSALVLDGKALAAKTEQELSQRVTALKARNGQTPILATILVGDDPASATYVKMKGNACTRIGMESIKVELPSSTTTEELLAKIQELNDNPNVHGILLQHPVPHQIDERLCFDAIAPEKDVDGVTCLGFGRMAMGEEAYGCATPKGIMRLLEAYNIEIAGKHAVVVGRSPILGKPMAMMLLNANATVTICHSRTRNLPDLIKQADIIVGAVGKPEFIKAEWIKDGAVVVDAGYHPGGVGDIELGPLVERAAAYTPVPGGVGPMTINTLIYQSVDSGEKKIR</sequence>
<feature type="chain" id="PRO_1000147451" description="Bifunctional protein FolD">
    <location>
        <begin position="1"/>
        <end position="280"/>
    </location>
</feature>
<feature type="binding site" evidence="1">
    <location>
        <begin position="166"/>
        <end position="168"/>
    </location>
    <ligand>
        <name>NADP(+)</name>
        <dbReference type="ChEBI" id="CHEBI:58349"/>
    </ligand>
</feature>
<feature type="binding site" evidence="1">
    <location>
        <position position="191"/>
    </location>
    <ligand>
        <name>NADP(+)</name>
        <dbReference type="ChEBI" id="CHEBI:58349"/>
    </ligand>
</feature>
<organism>
    <name type="scientific">Cellvibrio japonicus (strain Ueda107)</name>
    <name type="common">Pseudomonas fluorescens subsp. cellulosa</name>
    <dbReference type="NCBI Taxonomy" id="498211"/>
    <lineage>
        <taxon>Bacteria</taxon>
        <taxon>Pseudomonadati</taxon>
        <taxon>Pseudomonadota</taxon>
        <taxon>Gammaproteobacteria</taxon>
        <taxon>Cellvibrionales</taxon>
        <taxon>Cellvibrionaceae</taxon>
        <taxon>Cellvibrio</taxon>
    </lineage>
</organism>
<gene>
    <name evidence="1" type="primary">folD</name>
    <name type="ordered locus">CJA_1964</name>
</gene>